<dbReference type="EMBL" id="Y17722">
    <property type="protein sequence ID" value="CAB50690.1"/>
    <property type="molecule type" value="Genomic_DNA"/>
</dbReference>
<dbReference type="EMBL" id="AY519544">
    <property type="protein sequence ID" value="AAS10014.1"/>
    <property type="molecule type" value="mRNA"/>
</dbReference>
<dbReference type="EMBL" id="AB025604">
    <property type="protein sequence ID" value="BAA97479.1"/>
    <property type="molecule type" value="Genomic_DNA"/>
</dbReference>
<dbReference type="EMBL" id="CP002688">
    <property type="protein sequence ID" value="AED97184.1"/>
    <property type="molecule type" value="Genomic_DNA"/>
</dbReference>
<dbReference type="EMBL" id="CP002688">
    <property type="protein sequence ID" value="AED97185.1"/>
    <property type="molecule type" value="Genomic_DNA"/>
</dbReference>
<dbReference type="EMBL" id="CP002688">
    <property type="protein sequence ID" value="AED97186.1"/>
    <property type="molecule type" value="Genomic_DNA"/>
</dbReference>
<dbReference type="EMBL" id="CP002688">
    <property type="protein sequence ID" value="AED97187.1"/>
    <property type="molecule type" value="Genomic_DNA"/>
</dbReference>
<dbReference type="EMBL" id="CP002688">
    <property type="protein sequence ID" value="ANM70341.1"/>
    <property type="molecule type" value="Genomic_DNA"/>
</dbReference>
<dbReference type="EMBL" id="AY128382">
    <property type="protein sequence ID" value="AAM91585.1"/>
    <property type="molecule type" value="mRNA"/>
</dbReference>
<dbReference type="EMBL" id="BT000117">
    <property type="protein sequence ID" value="AAN15436.1"/>
    <property type="molecule type" value="mRNA"/>
</dbReference>
<dbReference type="EMBL" id="AK316779">
    <property type="protein sequence ID" value="BAH19498.1"/>
    <property type="molecule type" value="mRNA"/>
</dbReference>
<dbReference type="EMBL" id="AK318830">
    <property type="protein sequence ID" value="BAH56945.1"/>
    <property type="molecule type" value="mRNA"/>
</dbReference>
<dbReference type="PIR" id="T51230">
    <property type="entry name" value="T51230"/>
</dbReference>
<dbReference type="RefSeq" id="NP_001078770.1">
    <molecule id="Q8L7L8-3"/>
    <property type="nucleotide sequence ID" value="NM_001085301.1"/>
</dbReference>
<dbReference type="RefSeq" id="NP_001078771.1">
    <molecule id="Q8L7L8-4"/>
    <property type="nucleotide sequence ID" value="NM_001085302.1"/>
</dbReference>
<dbReference type="RefSeq" id="NP_001331960.1">
    <molecule id="Q8L7L8-1"/>
    <property type="nucleotide sequence ID" value="NM_001345351.1"/>
</dbReference>
<dbReference type="RefSeq" id="NP_200751.1">
    <molecule id="Q8L7L8-1"/>
    <property type="nucleotide sequence ID" value="NM_125334.4"/>
</dbReference>
<dbReference type="RefSeq" id="NP_851221.1">
    <molecule id="Q8L7L8-1"/>
    <property type="nucleotide sequence ID" value="NM_180890.1"/>
</dbReference>
<dbReference type="PDB" id="2AJE">
    <property type="method" value="NMR"/>
    <property type="chains" value="A=464-560"/>
</dbReference>
<dbReference type="PDBsum" id="2AJE"/>
<dbReference type="BMRB" id="Q8L7L8"/>
<dbReference type="SMR" id="Q8L7L8"/>
<dbReference type="BioGRID" id="21306">
    <property type="interactions" value="8"/>
</dbReference>
<dbReference type="FunCoup" id="Q8L7L8">
    <property type="interactions" value="1"/>
</dbReference>
<dbReference type="IntAct" id="Q8L7L8">
    <property type="interactions" value="5"/>
</dbReference>
<dbReference type="STRING" id="3702.Q8L7L8"/>
<dbReference type="iPTMnet" id="Q8L7L8"/>
<dbReference type="PaxDb" id="3702-AT5G59430.2"/>
<dbReference type="ProteomicsDB" id="232383">
    <molecule id="Q8L7L8-1"/>
</dbReference>
<dbReference type="EnsemblPlants" id="AT5G59430.1">
    <molecule id="Q8L7L8-1"/>
    <property type="protein sequence ID" value="AT5G59430.1"/>
    <property type="gene ID" value="AT5G59430"/>
</dbReference>
<dbReference type="EnsemblPlants" id="AT5G59430.2">
    <molecule id="Q8L7L8-1"/>
    <property type="protein sequence ID" value="AT5G59430.2"/>
    <property type="gene ID" value="AT5G59430"/>
</dbReference>
<dbReference type="EnsemblPlants" id="AT5G59430.3">
    <molecule id="Q8L7L8-3"/>
    <property type="protein sequence ID" value="AT5G59430.3"/>
    <property type="gene ID" value="AT5G59430"/>
</dbReference>
<dbReference type="EnsemblPlants" id="AT5G59430.4">
    <molecule id="Q8L7L8-4"/>
    <property type="protein sequence ID" value="AT5G59430.4"/>
    <property type="gene ID" value="AT5G59430"/>
</dbReference>
<dbReference type="EnsemblPlants" id="AT5G59430.5">
    <molecule id="Q8L7L8-1"/>
    <property type="protein sequence ID" value="AT5G59430.5"/>
    <property type="gene ID" value="AT5G59430"/>
</dbReference>
<dbReference type="GeneID" id="836062"/>
<dbReference type="Gramene" id="AT5G59430.1">
    <molecule id="Q8L7L8-1"/>
    <property type="protein sequence ID" value="AT5G59430.1"/>
    <property type="gene ID" value="AT5G59430"/>
</dbReference>
<dbReference type="Gramene" id="AT5G59430.2">
    <molecule id="Q8L7L8-1"/>
    <property type="protein sequence ID" value="AT5G59430.2"/>
    <property type="gene ID" value="AT5G59430"/>
</dbReference>
<dbReference type="Gramene" id="AT5G59430.3">
    <molecule id="Q8L7L8-3"/>
    <property type="protein sequence ID" value="AT5G59430.3"/>
    <property type="gene ID" value="AT5G59430"/>
</dbReference>
<dbReference type="Gramene" id="AT5G59430.4">
    <molecule id="Q8L7L8-4"/>
    <property type="protein sequence ID" value="AT5G59430.4"/>
    <property type="gene ID" value="AT5G59430"/>
</dbReference>
<dbReference type="Gramene" id="AT5G59430.5">
    <molecule id="Q8L7L8-1"/>
    <property type="protein sequence ID" value="AT5G59430.5"/>
    <property type="gene ID" value="AT5G59430"/>
</dbReference>
<dbReference type="KEGG" id="ath:AT5G59430"/>
<dbReference type="Araport" id="AT5G59430"/>
<dbReference type="TAIR" id="AT5G59430">
    <property type="gene designation" value="TRP1"/>
</dbReference>
<dbReference type="eggNOG" id="ENOG502QPSZ">
    <property type="taxonomic scope" value="Eukaryota"/>
</dbReference>
<dbReference type="InParanoid" id="Q8L7L8"/>
<dbReference type="OMA" id="CQAGICH"/>
<dbReference type="PhylomeDB" id="Q8L7L8"/>
<dbReference type="EvolutionaryTrace" id="Q8L7L8"/>
<dbReference type="PRO" id="PR:Q8L7L8"/>
<dbReference type="Proteomes" id="UP000006548">
    <property type="component" value="Chromosome 5"/>
</dbReference>
<dbReference type="ExpressionAtlas" id="Q8L7L8">
    <property type="expression patterns" value="baseline and differential"/>
</dbReference>
<dbReference type="GO" id="GO:0005737">
    <property type="term" value="C:cytoplasm"/>
    <property type="evidence" value="ECO:0000314"/>
    <property type="project" value="TAIR"/>
</dbReference>
<dbReference type="GO" id="GO:0016020">
    <property type="term" value="C:membrane"/>
    <property type="evidence" value="ECO:0000314"/>
    <property type="project" value="TAIR"/>
</dbReference>
<dbReference type="GO" id="GO:0031965">
    <property type="term" value="C:nuclear membrane"/>
    <property type="evidence" value="ECO:0000314"/>
    <property type="project" value="TAIR"/>
</dbReference>
<dbReference type="GO" id="GO:0005886">
    <property type="term" value="C:plasma membrane"/>
    <property type="evidence" value="ECO:0000314"/>
    <property type="project" value="TAIR"/>
</dbReference>
<dbReference type="GO" id="GO:0003691">
    <property type="term" value="F:double-stranded telomeric DNA binding"/>
    <property type="evidence" value="ECO:0000314"/>
    <property type="project" value="TAIR"/>
</dbReference>
<dbReference type="GO" id="GO:0009873">
    <property type="term" value="P:ethylene-activated signaling pathway"/>
    <property type="evidence" value="ECO:0000315"/>
    <property type="project" value="TAIR"/>
</dbReference>
<dbReference type="CDD" id="cd11660">
    <property type="entry name" value="SANT_TRF"/>
    <property type="match status" value="1"/>
</dbReference>
<dbReference type="CDD" id="cd17039">
    <property type="entry name" value="Ubl_ubiquitin_like"/>
    <property type="match status" value="1"/>
</dbReference>
<dbReference type="Gene3D" id="1.10.246.220">
    <property type="match status" value="1"/>
</dbReference>
<dbReference type="Gene3D" id="3.10.20.90">
    <property type="entry name" value="Phosphatidylinositol 3-kinase Catalytic Subunit, Chain A, domain 1"/>
    <property type="match status" value="1"/>
</dbReference>
<dbReference type="InterPro" id="IPR009057">
    <property type="entry name" value="Homeodomain-like_sf"/>
</dbReference>
<dbReference type="InterPro" id="IPR017930">
    <property type="entry name" value="Myb_dom"/>
</dbReference>
<dbReference type="InterPro" id="IPR001005">
    <property type="entry name" value="SANT/Myb"/>
</dbReference>
<dbReference type="InterPro" id="IPR031105">
    <property type="entry name" value="TRP_plant"/>
</dbReference>
<dbReference type="InterPro" id="IPR000626">
    <property type="entry name" value="Ubiquitin-like_dom"/>
</dbReference>
<dbReference type="InterPro" id="IPR029071">
    <property type="entry name" value="Ubiquitin-like_domsf"/>
</dbReference>
<dbReference type="PANTHER" id="PTHR21717:SF65">
    <property type="entry name" value="TELOMERE REPEAT-BINDING PROTEIN 1"/>
    <property type="match status" value="1"/>
</dbReference>
<dbReference type="PANTHER" id="PTHR21717">
    <property type="entry name" value="TELOMERIC REPEAT BINDING PROTEIN"/>
    <property type="match status" value="1"/>
</dbReference>
<dbReference type="Pfam" id="PF23603">
    <property type="entry name" value="Ubiquitin_TPR1"/>
    <property type="match status" value="1"/>
</dbReference>
<dbReference type="SMART" id="SM00717">
    <property type="entry name" value="SANT"/>
    <property type="match status" value="1"/>
</dbReference>
<dbReference type="SUPFAM" id="SSF46689">
    <property type="entry name" value="Homeodomain-like"/>
    <property type="match status" value="1"/>
</dbReference>
<dbReference type="SUPFAM" id="SSF54236">
    <property type="entry name" value="Ubiquitin-like"/>
    <property type="match status" value="1"/>
</dbReference>
<dbReference type="PROSITE" id="PS51294">
    <property type="entry name" value="HTH_MYB"/>
    <property type="match status" value="1"/>
</dbReference>
<dbReference type="PROSITE" id="PS50053">
    <property type="entry name" value="UBIQUITIN_2"/>
    <property type="match status" value="1"/>
</dbReference>
<comment type="function">
    <text>Binds specifically to the plant telomeric double-stranded DNA sequences 5'-GGTTTAG-3'. At least 4 repeats of telomeric sequences are required for binding. Induces DNA bending.</text>
</comment>
<comment type="subunit">
    <text evidence="4 5">Homodimer and heterodimer with TRP2 and TRP3. Interacts with KU70.</text>
</comment>
<comment type="interaction">
    <interactant intactId="EBI-476071">
        <id>Q8L7L8</id>
    </interactant>
    <interactant intactId="EBI-1606754">
        <id>Q38846</id>
        <label>ERS1</label>
    </interactant>
    <organismsDiffer>false</organismsDiffer>
    <experiments>2</experiments>
</comment>
<comment type="interaction">
    <interactant intactId="EBI-476071">
        <id>Q8L7L8</id>
    </interactant>
    <interactant intactId="EBI-476083">
        <id>Q9FQ08</id>
        <label>KU70</label>
    </interactant>
    <organismsDiffer>false</organismsDiffer>
    <experiments>2</experiments>
</comment>
<comment type="subcellular location">
    <subcellularLocation>
        <location evidence="2">Nucleus</location>
    </subcellularLocation>
</comment>
<comment type="alternative products">
    <event type="alternative splicing"/>
    <isoform>
        <id>Q8L7L8-1</id>
        <name>1</name>
        <sequence type="displayed"/>
    </isoform>
    <isoform>
        <id>Q8L7L8-2</id>
        <name>2</name>
        <sequence type="described" ref="VSP_039134"/>
    </isoform>
    <isoform>
        <id>Q8L7L8-3</id>
        <name>3</name>
        <sequence type="described" ref="VSP_039135"/>
    </isoform>
    <isoform>
        <id>Q8L7L8-4</id>
        <name>4</name>
        <sequence type="described" ref="VSP_039133"/>
    </isoform>
</comment>
<comment type="tissue specificity">
    <text evidence="4 6">Expressed ubiquitously. Highest expression in flowers and leaves.</text>
</comment>
<comment type="domain">
    <text>A N-terminal domain (80-269) is responsible for the interaction with KU70.</text>
</comment>
<comment type="domain">
    <text>The C-terminal domain (464-578) is sufficient for telomere binding.</text>
</comment>
<comment type="disruption phenotype">
    <text evidence="4">No visible phenotype, probably due to redundancy.</text>
</comment>
<gene>
    <name type="primary">TRP1</name>
    <name type="ordered locus">At5g59430</name>
    <name type="ORF">F2O15.20</name>
</gene>
<reference key="1">
    <citation type="journal article" date="2001" name="J. Biol. Chem.">
        <title>A plant gene encoding a Myb-like protein that binds telomeric GGTTTAG repeats in vitro.</title>
        <authorList>
            <person name="Chen C.M."/>
            <person name="Wang C.T."/>
            <person name="Ho C.H."/>
        </authorList>
    </citation>
    <scope>NUCLEOTIDE SEQUENCE [GENOMIC DNA]</scope>
    <scope>DNA-BINDING</scope>
</reference>
<reference key="2">
    <citation type="submission" date="2004-02" db="EMBL/GenBank/DDBJ databases">
        <title>The MYB transcription factor family in Arabidopsis: a genome-wide cloning and expression pattern analysis.</title>
        <authorList>
            <person name="Qu L."/>
            <person name="Gu H."/>
        </authorList>
    </citation>
    <scope>NUCLEOTIDE SEQUENCE [MRNA] (ISOFORM 1)</scope>
</reference>
<reference key="3">
    <citation type="submission" date="1999-04" db="EMBL/GenBank/DDBJ databases">
        <title>Structural analysis of Arabidopsis thaliana chromosome 5. XI.</title>
        <authorList>
            <person name="Kaneko T."/>
            <person name="Katoh T."/>
            <person name="Asamizu E."/>
            <person name="Sato S."/>
            <person name="Nakamura Y."/>
            <person name="Kotani H."/>
            <person name="Tabata S."/>
        </authorList>
    </citation>
    <scope>NUCLEOTIDE SEQUENCE [LARGE SCALE GENOMIC DNA]</scope>
    <source>
        <strain>cv. Columbia</strain>
    </source>
</reference>
<reference key="4">
    <citation type="journal article" date="2017" name="Plant J.">
        <title>Araport11: a complete reannotation of the Arabidopsis thaliana reference genome.</title>
        <authorList>
            <person name="Cheng C.Y."/>
            <person name="Krishnakumar V."/>
            <person name="Chan A.P."/>
            <person name="Thibaud-Nissen F."/>
            <person name="Schobel S."/>
            <person name="Town C.D."/>
        </authorList>
    </citation>
    <scope>GENOME REANNOTATION</scope>
    <source>
        <strain>cv. Columbia</strain>
    </source>
</reference>
<reference key="5">
    <citation type="journal article" date="2003" name="Science">
        <title>Empirical analysis of transcriptional activity in the Arabidopsis genome.</title>
        <authorList>
            <person name="Yamada K."/>
            <person name="Lim J."/>
            <person name="Dale J.M."/>
            <person name="Chen H."/>
            <person name="Shinn P."/>
            <person name="Palm C.J."/>
            <person name="Southwick A.M."/>
            <person name="Wu H.C."/>
            <person name="Kim C.J."/>
            <person name="Nguyen M."/>
            <person name="Pham P.K."/>
            <person name="Cheuk R.F."/>
            <person name="Karlin-Newmann G."/>
            <person name="Liu S.X."/>
            <person name="Lam B."/>
            <person name="Sakano H."/>
            <person name="Wu T."/>
            <person name="Yu G."/>
            <person name="Miranda M."/>
            <person name="Quach H.L."/>
            <person name="Tripp M."/>
            <person name="Chang C.H."/>
            <person name="Lee J.M."/>
            <person name="Toriumi M.J."/>
            <person name="Chan M.M."/>
            <person name="Tang C.C."/>
            <person name="Onodera C.S."/>
            <person name="Deng J.M."/>
            <person name="Akiyama K."/>
            <person name="Ansari Y."/>
            <person name="Arakawa T."/>
            <person name="Banh J."/>
            <person name="Banno F."/>
            <person name="Bowser L."/>
            <person name="Brooks S.Y."/>
            <person name="Carninci P."/>
            <person name="Chao Q."/>
            <person name="Choy N."/>
            <person name="Enju A."/>
            <person name="Goldsmith A.D."/>
            <person name="Gurjal M."/>
            <person name="Hansen N.F."/>
            <person name="Hayashizaki Y."/>
            <person name="Johnson-Hopson C."/>
            <person name="Hsuan V.W."/>
            <person name="Iida K."/>
            <person name="Karnes M."/>
            <person name="Khan S."/>
            <person name="Koesema E."/>
            <person name="Ishida J."/>
            <person name="Jiang P.X."/>
            <person name="Jones T."/>
            <person name="Kawai J."/>
            <person name="Kamiya A."/>
            <person name="Meyers C."/>
            <person name="Nakajima M."/>
            <person name="Narusaka M."/>
            <person name="Seki M."/>
            <person name="Sakurai T."/>
            <person name="Satou M."/>
            <person name="Tamse R."/>
            <person name="Vaysberg M."/>
            <person name="Wallender E.K."/>
            <person name="Wong C."/>
            <person name="Yamamura Y."/>
            <person name="Yuan S."/>
            <person name="Shinozaki K."/>
            <person name="Davis R.W."/>
            <person name="Theologis A."/>
            <person name="Ecker J.R."/>
        </authorList>
    </citation>
    <scope>NUCLEOTIDE SEQUENCE [LARGE SCALE MRNA] (ISOFORM 1)</scope>
    <source>
        <strain>cv. Columbia</strain>
    </source>
</reference>
<reference key="6">
    <citation type="journal article" date="2009" name="DNA Res.">
        <title>Analysis of multiple occurrences of alternative splicing events in Arabidopsis thaliana using novel sequenced full-length cDNAs.</title>
        <authorList>
            <person name="Iida K."/>
            <person name="Fukami-Kobayashi K."/>
            <person name="Toyoda A."/>
            <person name="Sakaki Y."/>
            <person name="Kobayashi M."/>
            <person name="Seki M."/>
            <person name="Shinozaki K."/>
        </authorList>
    </citation>
    <scope>NUCLEOTIDE SEQUENCE [LARGE SCALE MRNA] (ISOFORMS 1 AND 2)</scope>
    <source>
        <strain>cv. Columbia</strain>
    </source>
</reference>
<reference key="7">
    <citation type="journal article" date="2004" name="FEBS Lett.">
        <title>Interactions of putative telomere-binding proteins in Arabidopsis thaliana: identification of functional TRF2 homolog in plants.</title>
        <authorList>
            <person name="Kuchar M."/>
            <person name="Fajkus J."/>
        </authorList>
    </citation>
    <scope>INTERACTION WITH KU70</scope>
</reference>
<reference key="8">
    <citation type="journal article" date="2004" name="J. Biol. Chem.">
        <title>A C-terminal Myb extension domain defines a novel family of double-strand telomeric DNA-binding proteins in Arabidopsis.</title>
        <authorList>
            <person name="Karamysheva Z.N."/>
            <person name="Surovtseva Y.V."/>
            <person name="Vespa L."/>
            <person name="Shakirov E.V."/>
            <person name="Shippen D.E."/>
        </authorList>
    </citation>
    <scope>GENE FAMILY</scope>
    <scope>TISSUE SPECIFICITY</scope>
    <scope>SUBUNIT</scope>
    <scope>DISRUPTION PHENOTYPE</scope>
</reference>
<reference key="9">
    <citation type="journal article" date="2005" name="Mol. Genet. Genomics">
        <title>AtTBP2 and AtTRP2 in Arabidopsis encode proteins that bind plant telomeric DNA and induce DNA bending in vitro.</title>
        <authorList>
            <person name="Hwang M.G."/>
            <person name="Kim K."/>
            <person name="Lee W.K."/>
            <person name="Cho M.H."/>
        </authorList>
    </citation>
    <scope>DNA-BINDING</scope>
    <scope>TISSUE SPECIFICITY</scope>
</reference>
<reference key="10">
    <citation type="journal article" date="2006" name="Plant Mol. Biol.">
        <title>The MYB transcription factor superfamily of Arabidopsis: expression analysis and phylogenetic comparison with the rice MYB family.</title>
        <authorList>
            <person name="Chen Y."/>
            <person name="Yang X."/>
            <person name="He K."/>
            <person name="Liu M."/>
            <person name="Li J."/>
            <person name="Gao Z."/>
            <person name="Lin Z."/>
            <person name="Zhang Y."/>
            <person name="Wang X."/>
            <person name="Qiu X."/>
            <person name="Shen Y."/>
            <person name="Zhang L."/>
            <person name="Deng X."/>
            <person name="Luo J."/>
            <person name="Deng X.-W."/>
            <person name="Chen Z."/>
            <person name="Gu H."/>
            <person name="Qu L.-J."/>
        </authorList>
    </citation>
    <scope>GENE FAMILY</scope>
</reference>
<reference key="11">
    <citation type="journal article" date="2006" name="J. Mol. Biol.">
        <title>Solution structure of the Arabidopsis thaliana telomeric repeat-binding protein DNA binding domain: a new fold with an additional C-terminal helix.</title>
        <authorList>
            <person name="Sue S.C."/>
            <person name="Hsiao H.H."/>
            <person name="Chung B.C."/>
            <person name="Cheng Y.H."/>
            <person name="Hsueh K.L."/>
            <person name="Chen C.M."/>
            <person name="Ho C.H."/>
            <person name="Huang T.H."/>
        </authorList>
    </citation>
    <scope>STRUCTURE BY NMR OF 464-560</scope>
    <scope>DNA-BINDING</scope>
</reference>
<accession>Q8L7L8</accession>
<accession>A8MQF8</accession>
<accession>A8MQM5</accession>
<accession>B9DFI1</accession>
<accession>C0Z2L6</accession>
<accession>Q9LTI6</accession>
<accession>Q9XGN0</accession>
<organism>
    <name type="scientific">Arabidopsis thaliana</name>
    <name type="common">Mouse-ear cress</name>
    <dbReference type="NCBI Taxonomy" id="3702"/>
    <lineage>
        <taxon>Eukaryota</taxon>
        <taxon>Viridiplantae</taxon>
        <taxon>Streptophyta</taxon>
        <taxon>Embryophyta</taxon>
        <taxon>Tracheophyta</taxon>
        <taxon>Spermatophyta</taxon>
        <taxon>Magnoliopsida</taxon>
        <taxon>eudicotyledons</taxon>
        <taxon>Gunneridae</taxon>
        <taxon>Pentapetalae</taxon>
        <taxon>rosids</taxon>
        <taxon>malvids</taxon>
        <taxon>Brassicales</taxon>
        <taxon>Brassicaceae</taxon>
        <taxon>Camelineae</taxon>
        <taxon>Arabidopsis</taxon>
    </lineage>
</organism>
<name>TRP1_ARATH</name>
<sequence>MVSHKCVEEFGYASYLVPSNARAPRSARKRRSIEKRISKEDDNMCAIDLLATVAGHLSFESGSSLMSIDKLIEDHRVKEEFPEEEKPLMPVALSPYRGSLSPCGFSSVINGKVENEVDGFSYSGGSDACQVGNFSQDVKPDIDGDAVVLDARPNVVVSLGSSSRTEVPSIGNCVSHGVRDDVNLFSRDDDENFSKYIHPRVTKHSPRTVPRIGDRRIRKILASRHWKGGSRHSDTKPWRNYYLHQQRSYPIKKRKNFDHISDSVTDDYRMRTKMHRGSRKGQGASFVASDSHVKLRIKSFRVPELFIEIPETATVGSLKRMVMEAVSTLLSDGHRVGLMVQGKKVRDDNKTLHQTGISQDNSHLDSLDFSLEPSSEMPQLLTSHPLGHACEELLPVCQATKIDNVLESDHHDSALFPSDSLGNNNVTEDSKAMISVALNELSSQSQPPSRKSRRSEQQQQQAAQRRIRRPFSVAEVEALVQAVEKLGTGRWRDVKLCAFEDADHRTYVDLKDKWKTLVHTAKISPQQRRGEPVPQELLNRVLNAHGYWTQQQMQQLQQNVNKLEQETQSQTTEGLLLL</sequence>
<feature type="chain" id="PRO_0000394124" description="Telomere repeat-binding protein 1">
    <location>
        <begin position="1"/>
        <end position="578"/>
    </location>
</feature>
<feature type="domain" description="Ubiquitin-like" evidence="1">
    <location>
        <begin position="293"/>
        <end position="372"/>
    </location>
</feature>
<feature type="domain" description="HTH myb-type" evidence="2">
    <location>
        <begin position="463"/>
        <end position="522"/>
    </location>
</feature>
<feature type="DNA-binding region" description="H-T-H motif" evidence="2">
    <location>
        <begin position="491"/>
        <end position="518"/>
    </location>
</feature>
<feature type="region of interest" description="Disordered" evidence="3">
    <location>
        <begin position="440"/>
        <end position="467"/>
    </location>
</feature>
<feature type="region of interest" description="Interaction with DNA">
    <location>
        <begin position="465"/>
        <end position="469"/>
    </location>
</feature>
<feature type="region of interest" description="Interaction with DNA">
    <location>
        <begin position="511"/>
        <end position="515"/>
    </location>
</feature>
<feature type="region of interest" description="Interaction with DNA">
    <location>
        <begin position="522"/>
        <end position="529"/>
    </location>
</feature>
<feature type="splice variant" id="VSP_039133" description="In isoform 4." evidence="8">
    <location>
        <position position="29"/>
    </location>
</feature>
<feature type="splice variant" id="VSP_039134" description="In isoform 2." evidence="7">
    <original>QLQQNVNKLEQETQSQTTEGLLLL</original>
    <variation>PWRSSLLCVLLLLLMIM</variation>
    <location>
        <begin position="555"/>
        <end position="578"/>
    </location>
</feature>
<feature type="splice variant" id="VSP_039135" description="In isoform 3." evidence="8">
    <original>QLQQNVNKLEQETQSQTTEGLLLL</original>
    <variation>HLGGRLSFVYYYYY</variation>
    <location>
        <begin position="555"/>
        <end position="578"/>
    </location>
</feature>
<feature type="sequence conflict" description="In Ref. 1; CAB50690." evidence="8" ref="1">
    <original>H</original>
    <variation>R</variation>
    <location>
        <position position="4"/>
    </location>
</feature>
<feature type="sequence conflict" description="In Ref. 1; CAB50690." evidence="8" ref="1">
    <original>S</original>
    <variation>P</variation>
    <location>
        <position position="58"/>
    </location>
</feature>
<feature type="sequence conflict" description="In Ref. 6; BAH19498." evidence="8" ref="6">
    <original>D</original>
    <variation>E</variation>
    <location>
        <position position="137"/>
    </location>
</feature>
<feature type="sequence conflict" description="In Ref. 5; AAM91585/AAN15436." evidence="8" ref="5">
    <original>V</original>
    <variation>A</variation>
    <location>
        <position position="473"/>
    </location>
</feature>
<feature type="helix" evidence="9">
    <location>
        <begin position="473"/>
        <end position="486"/>
    </location>
</feature>
<feature type="strand" evidence="9">
    <location>
        <begin position="488"/>
        <end position="490"/>
    </location>
</feature>
<feature type="helix" evidence="9">
    <location>
        <begin position="491"/>
        <end position="495"/>
    </location>
</feature>
<feature type="strand" evidence="9">
    <location>
        <begin position="496"/>
        <end position="501"/>
    </location>
</feature>
<feature type="helix" evidence="9">
    <location>
        <begin position="507"/>
        <end position="519"/>
    </location>
</feature>
<feature type="turn" evidence="9">
    <location>
        <begin position="525"/>
        <end position="529"/>
    </location>
</feature>
<feature type="helix" evidence="9">
    <location>
        <begin position="536"/>
        <end position="551"/>
    </location>
</feature>
<feature type="turn" evidence="9">
    <location>
        <begin position="552"/>
        <end position="555"/>
    </location>
</feature>
<feature type="strand" evidence="9">
    <location>
        <begin position="556"/>
        <end position="558"/>
    </location>
</feature>
<evidence type="ECO:0000255" key="1">
    <source>
        <dbReference type="PROSITE-ProRule" id="PRU00214"/>
    </source>
</evidence>
<evidence type="ECO:0000255" key="2">
    <source>
        <dbReference type="PROSITE-ProRule" id="PRU00625"/>
    </source>
</evidence>
<evidence type="ECO:0000256" key="3">
    <source>
        <dbReference type="SAM" id="MobiDB-lite"/>
    </source>
</evidence>
<evidence type="ECO:0000269" key="4">
    <source>
    </source>
</evidence>
<evidence type="ECO:0000269" key="5">
    <source>
    </source>
</evidence>
<evidence type="ECO:0000269" key="6">
    <source>
    </source>
</evidence>
<evidence type="ECO:0000303" key="7">
    <source>
    </source>
</evidence>
<evidence type="ECO:0000305" key="8"/>
<evidence type="ECO:0007829" key="9">
    <source>
        <dbReference type="PDB" id="2AJE"/>
    </source>
</evidence>
<keyword id="KW-0002">3D-structure</keyword>
<keyword id="KW-0025">Alternative splicing</keyword>
<keyword id="KW-0238">DNA-binding</keyword>
<keyword id="KW-0539">Nucleus</keyword>
<keyword id="KW-1185">Reference proteome</keyword>
<keyword id="KW-0804">Transcription</keyword>
<keyword id="KW-0805">Transcription regulation</keyword>
<proteinExistence type="evidence at protein level"/>
<protein>
    <recommendedName>
        <fullName>Telomere repeat-binding protein 1</fullName>
        <shortName>AtTRP1</shortName>
    </recommendedName>
</protein>